<accession>Q3YUN6</accession>
<proteinExistence type="inferred from homology"/>
<comment type="function">
    <text evidence="1">Part of the ABC transporter complex PhnCDE involved in phosphonates import. Responsible for energy coupling to the transport system.</text>
</comment>
<comment type="catalytic activity">
    <reaction evidence="1">
        <text>phosphonate(out) + ATP + H2O = phosphonate(in) + ADP + phosphate + H(+)</text>
        <dbReference type="Rhea" id="RHEA:18065"/>
        <dbReference type="ChEBI" id="CHEBI:15377"/>
        <dbReference type="ChEBI" id="CHEBI:15378"/>
        <dbReference type="ChEBI" id="CHEBI:16215"/>
        <dbReference type="ChEBI" id="CHEBI:30616"/>
        <dbReference type="ChEBI" id="CHEBI:43474"/>
        <dbReference type="ChEBI" id="CHEBI:456216"/>
        <dbReference type="EC" id="7.3.2.2"/>
    </reaction>
</comment>
<comment type="subunit">
    <text evidence="1">The complex is composed of two ATP-binding proteins (PhnC), two transmembrane proteins (PhnE) and a solute-binding protein (PhnD).</text>
</comment>
<comment type="subcellular location">
    <subcellularLocation>
        <location evidence="1">Cell inner membrane</location>
        <topology evidence="1">Peripheral membrane protein</topology>
    </subcellularLocation>
</comment>
<comment type="similarity">
    <text evidence="1">Belongs to the ABC transporter superfamily. Phosphonates importer (TC 3.A.1.9.1) family.</text>
</comment>
<organism>
    <name type="scientific">Shigella sonnei (strain Ss046)</name>
    <dbReference type="NCBI Taxonomy" id="300269"/>
    <lineage>
        <taxon>Bacteria</taxon>
        <taxon>Pseudomonadati</taxon>
        <taxon>Pseudomonadota</taxon>
        <taxon>Gammaproteobacteria</taxon>
        <taxon>Enterobacterales</taxon>
        <taxon>Enterobacteriaceae</taxon>
        <taxon>Shigella</taxon>
    </lineage>
</organism>
<sequence>MQTIIRVEKLAKTFNQHQALHAVALNIHHGEMVALLGPSGSGKSTLLRHLSGLITGDKSAGSHIELLGRTVQREGRLARDIRKSRANTGYIFQQFNLVNRLSVLENVLIGALGSTPFWRTCFSWFTREQKQRALQALTRVGMVHFAHQRVSTLSGGQQQRVAIARALMQQAKVILADEPIASLDPESARIVMDTLRDINQNDGITVVVTLHQVDYALRYCERIVALRQGHVFYDGSSQQFDNERFDHLYRSINRIEENAKAA</sequence>
<protein>
    <recommendedName>
        <fullName evidence="1">Phosphonates import ATP-binding protein PhnC</fullName>
        <ecNumber evidence="1">7.3.2.2</ecNumber>
    </recommendedName>
</protein>
<reference key="1">
    <citation type="journal article" date="2005" name="Nucleic Acids Res.">
        <title>Genome dynamics and diversity of Shigella species, the etiologic agents of bacillary dysentery.</title>
        <authorList>
            <person name="Yang F."/>
            <person name="Yang J."/>
            <person name="Zhang X."/>
            <person name="Chen L."/>
            <person name="Jiang Y."/>
            <person name="Yan Y."/>
            <person name="Tang X."/>
            <person name="Wang J."/>
            <person name="Xiong Z."/>
            <person name="Dong J."/>
            <person name="Xue Y."/>
            <person name="Zhu Y."/>
            <person name="Xu X."/>
            <person name="Sun L."/>
            <person name="Chen S."/>
            <person name="Nie H."/>
            <person name="Peng J."/>
            <person name="Xu J."/>
            <person name="Wang Y."/>
            <person name="Yuan Z."/>
            <person name="Wen Y."/>
            <person name="Yao Z."/>
            <person name="Shen Y."/>
            <person name="Qiang B."/>
            <person name="Hou Y."/>
            <person name="Yu J."/>
            <person name="Jin Q."/>
        </authorList>
    </citation>
    <scope>NUCLEOTIDE SEQUENCE [LARGE SCALE GENOMIC DNA]</scope>
    <source>
        <strain>Ss046</strain>
    </source>
</reference>
<evidence type="ECO:0000255" key="1">
    <source>
        <dbReference type="HAMAP-Rule" id="MF_01713"/>
    </source>
</evidence>
<feature type="chain" id="PRO_0000274753" description="Phosphonates import ATP-binding protein PhnC">
    <location>
        <begin position="1"/>
        <end position="262"/>
    </location>
</feature>
<feature type="domain" description="ABC transporter" evidence="1">
    <location>
        <begin position="5"/>
        <end position="253"/>
    </location>
</feature>
<feature type="binding site" evidence="1">
    <location>
        <begin position="37"/>
        <end position="44"/>
    </location>
    <ligand>
        <name>ATP</name>
        <dbReference type="ChEBI" id="CHEBI:30616"/>
    </ligand>
</feature>
<name>PHNC_SHISS</name>
<dbReference type="EC" id="7.3.2.2" evidence="1"/>
<dbReference type="EMBL" id="CP000038">
    <property type="protein sequence ID" value="AAZ90776.1"/>
    <property type="molecule type" value="Genomic_DNA"/>
</dbReference>
<dbReference type="RefSeq" id="WP_001193377.1">
    <property type="nucleotide sequence ID" value="NC_007384.1"/>
</dbReference>
<dbReference type="SMR" id="Q3YUN6"/>
<dbReference type="KEGG" id="ssn:SSON_4281"/>
<dbReference type="HOGENOM" id="CLU_000604_1_22_6"/>
<dbReference type="Proteomes" id="UP000002529">
    <property type="component" value="Chromosome"/>
</dbReference>
<dbReference type="GO" id="GO:0005886">
    <property type="term" value="C:plasma membrane"/>
    <property type="evidence" value="ECO:0007669"/>
    <property type="project" value="UniProtKB-SubCell"/>
</dbReference>
<dbReference type="GO" id="GO:0015416">
    <property type="term" value="F:ABC-type phosphonate transporter activity"/>
    <property type="evidence" value="ECO:0007669"/>
    <property type="project" value="UniProtKB-EC"/>
</dbReference>
<dbReference type="GO" id="GO:0005524">
    <property type="term" value="F:ATP binding"/>
    <property type="evidence" value="ECO:0007669"/>
    <property type="project" value="UniProtKB-KW"/>
</dbReference>
<dbReference type="GO" id="GO:0016887">
    <property type="term" value="F:ATP hydrolysis activity"/>
    <property type="evidence" value="ECO:0007669"/>
    <property type="project" value="InterPro"/>
</dbReference>
<dbReference type="CDD" id="cd03256">
    <property type="entry name" value="ABC_PhnC_transporter"/>
    <property type="match status" value="1"/>
</dbReference>
<dbReference type="Gene3D" id="3.40.50.300">
    <property type="entry name" value="P-loop containing nucleotide triphosphate hydrolases"/>
    <property type="match status" value="1"/>
</dbReference>
<dbReference type="InterPro" id="IPR003593">
    <property type="entry name" value="AAA+_ATPase"/>
</dbReference>
<dbReference type="InterPro" id="IPR003439">
    <property type="entry name" value="ABC_transporter-like_ATP-bd"/>
</dbReference>
<dbReference type="InterPro" id="IPR017871">
    <property type="entry name" value="ABC_transporter-like_CS"/>
</dbReference>
<dbReference type="InterPro" id="IPR012693">
    <property type="entry name" value="ABC_transpr_PhnC"/>
</dbReference>
<dbReference type="InterPro" id="IPR050086">
    <property type="entry name" value="MetN_ABC_transporter-like"/>
</dbReference>
<dbReference type="InterPro" id="IPR027417">
    <property type="entry name" value="P-loop_NTPase"/>
</dbReference>
<dbReference type="NCBIfam" id="TIGR02315">
    <property type="entry name" value="ABC_phnC"/>
    <property type="match status" value="1"/>
</dbReference>
<dbReference type="NCBIfam" id="NF007438">
    <property type="entry name" value="PRK09984.1"/>
    <property type="match status" value="1"/>
</dbReference>
<dbReference type="PANTHER" id="PTHR43166">
    <property type="entry name" value="AMINO ACID IMPORT ATP-BINDING PROTEIN"/>
    <property type="match status" value="1"/>
</dbReference>
<dbReference type="PANTHER" id="PTHR43166:SF6">
    <property type="entry name" value="PHOSPHONATES IMPORT ATP-BINDING PROTEIN PHNC"/>
    <property type="match status" value="1"/>
</dbReference>
<dbReference type="Pfam" id="PF00005">
    <property type="entry name" value="ABC_tran"/>
    <property type="match status" value="1"/>
</dbReference>
<dbReference type="SMART" id="SM00382">
    <property type="entry name" value="AAA"/>
    <property type="match status" value="1"/>
</dbReference>
<dbReference type="SUPFAM" id="SSF52540">
    <property type="entry name" value="P-loop containing nucleoside triphosphate hydrolases"/>
    <property type="match status" value="1"/>
</dbReference>
<dbReference type="PROSITE" id="PS00211">
    <property type="entry name" value="ABC_TRANSPORTER_1"/>
    <property type="match status" value="1"/>
</dbReference>
<dbReference type="PROSITE" id="PS50893">
    <property type="entry name" value="ABC_TRANSPORTER_2"/>
    <property type="match status" value="1"/>
</dbReference>
<dbReference type="PROSITE" id="PS51249">
    <property type="entry name" value="PHNC"/>
    <property type="match status" value="1"/>
</dbReference>
<gene>
    <name evidence="1" type="primary">phnC</name>
    <name type="ordered locus">SSON_4281</name>
</gene>
<keyword id="KW-0067">ATP-binding</keyword>
<keyword id="KW-0997">Cell inner membrane</keyword>
<keyword id="KW-1003">Cell membrane</keyword>
<keyword id="KW-0472">Membrane</keyword>
<keyword id="KW-0547">Nucleotide-binding</keyword>
<keyword id="KW-0918">Phosphonate transport</keyword>
<keyword id="KW-1185">Reference proteome</keyword>
<keyword id="KW-1278">Translocase</keyword>
<keyword id="KW-0813">Transport</keyword>